<evidence type="ECO:0000255" key="1"/>
<evidence type="ECO:0000305" key="2"/>
<protein>
    <recommendedName>
        <fullName>Uncharacterized protein YoaI</fullName>
    </recommendedName>
</protein>
<keyword id="KW-0472">Membrane</keyword>
<keyword id="KW-1185">Reference proteome</keyword>
<keyword id="KW-0812">Transmembrane</keyword>
<keyword id="KW-1133">Transmembrane helix</keyword>
<gene>
    <name type="primary">yoaI</name>
    <name type="ordered locus">SDY_1686</name>
</gene>
<comment type="subcellular location">
    <subcellularLocation>
        <location evidence="2">Membrane</location>
        <topology evidence="2">Single-pass membrane protein</topology>
    </subcellularLocation>
</comment>
<comment type="sequence caution" evidence="2">
    <conflict type="erroneous initiation">
        <sequence resource="EMBL-CDS" id="ABB61807"/>
    </conflict>
</comment>
<sequence>MNDQMFVETLIITSSFFAIAVVLVLSVLLIERTG</sequence>
<feature type="chain" id="PRO_0000248931" description="Uncharacterized protein YoaI">
    <location>
        <begin position="1"/>
        <end position="34"/>
    </location>
</feature>
<feature type="transmembrane region" description="Helical" evidence="1">
    <location>
        <begin position="10"/>
        <end position="30"/>
    </location>
</feature>
<organism>
    <name type="scientific">Shigella dysenteriae serotype 1 (strain Sd197)</name>
    <dbReference type="NCBI Taxonomy" id="300267"/>
    <lineage>
        <taxon>Bacteria</taxon>
        <taxon>Pseudomonadati</taxon>
        <taxon>Pseudomonadota</taxon>
        <taxon>Gammaproteobacteria</taxon>
        <taxon>Enterobacterales</taxon>
        <taxon>Enterobacteriaceae</taxon>
        <taxon>Shigella</taxon>
    </lineage>
</organism>
<accession>Q32FU8</accession>
<dbReference type="EMBL" id="CP000034">
    <property type="protein sequence ID" value="ABB61807.1"/>
    <property type="status" value="ALT_INIT"/>
    <property type="molecule type" value="Genomic_DNA"/>
</dbReference>
<dbReference type="RefSeq" id="WP_000999630.1">
    <property type="nucleotide sequence ID" value="NC_007606.1"/>
</dbReference>
<dbReference type="RefSeq" id="YP_403298.1">
    <property type="nucleotide sequence ID" value="NC_007606.1"/>
</dbReference>
<dbReference type="SMR" id="Q32FU8"/>
<dbReference type="EnsemblBacteria" id="ABB61807">
    <property type="protein sequence ID" value="ABB61807"/>
    <property type="gene ID" value="SDY_1686"/>
</dbReference>
<dbReference type="GeneID" id="93776034"/>
<dbReference type="KEGG" id="sdy:SDY_1686"/>
<dbReference type="PATRIC" id="fig|300267.13.peg.2033"/>
<dbReference type="HOGENOM" id="CLU_216793_1_0_6"/>
<dbReference type="Proteomes" id="UP000002716">
    <property type="component" value="Chromosome"/>
</dbReference>
<dbReference type="GO" id="GO:0016020">
    <property type="term" value="C:membrane"/>
    <property type="evidence" value="ECO:0007669"/>
    <property type="project" value="UniProtKB-SubCell"/>
</dbReference>
<dbReference type="InterPro" id="IPR048191">
    <property type="entry name" value="YoaI-like"/>
</dbReference>
<dbReference type="NCBIfam" id="NF041475">
    <property type="entry name" value="membrane_YoaI"/>
    <property type="match status" value="1"/>
</dbReference>
<reference key="1">
    <citation type="journal article" date="2005" name="Nucleic Acids Res.">
        <title>Genome dynamics and diversity of Shigella species, the etiologic agents of bacillary dysentery.</title>
        <authorList>
            <person name="Yang F."/>
            <person name="Yang J."/>
            <person name="Zhang X."/>
            <person name="Chen L."/>
            <person name="Jiang Y."/>
            <person name="Yan Y."/>
            <person name="Tang X."/>
            <person name="Wang J."/>
            <person name="Xiong Z."/>
            <person name="Dong J."/>
            <person name="Xue Y."/>
            <person name="Zhu Y."/>
            <person name="Xu X."/>
            <person name="Sun L."/>
            <person name="Chen S."/>
            <person name="Nie H."/>
            <person name="Peng J."/>
            <person name="Xu J."/>
            <person name="Wang Y."/>
            <person name="Yuan Z."/>
            <person name="Wen Y."/>
            <person name="Yao Z."/>
            <person name="Shen Y."/>
            <person name="Qiang B."/>
            <person name="Hou Y."/>
            <person name="Yu J."/>
            <person name="Jin Q."/>
        </authorList>
    </citation>
    <scope>NUCLEOTIDE SEQUENCE [LARGE SCALE GENOMIC DNA]</scope>
    <source>
        <strain>Sd197</strain>
    </source>
</reference>
<name>YOAI_SHIDS</name>
<proteinExistence type="predicted"/>